<reference key="1">
    <citation type="journal article" date="2003" name="DNA Res.">
        <title>Complete genome structure of Gloeobacter violaceus PCC 7421, a cyanobacterium that lacks thylakoids.</title>
        <authorList>
            <person name="Nakamura Y."/>
            <person name="Kaneko T."/>
            <person name="Sato S."/>
            <person name="Mimuro M."/>
            <person name="Miyashita H."/>
            <person name="Tsuchiya T."/>
            <person name="Sasamoto S."/>
            <person name="Watanabe A."/>
            <person name="Kawashima K."/>
            <person name="Kishida Y."/>
            <person name="Kiyokawa C."/>
            <person name="Kohara M."/>
            <person name="Matsumoto M."/>
            <person name="Matsuno A."/>
            <person name="Nakazaki N."/>
            <person name="Shimpo S."/>
            <person name="Takeuchi C."/>
            <person name="Yamada M."/>
            <person name="Tabata S."/>
        </authorList>
    </citation>
    <scope>NUCLEOTIDE SEQUENCE [LARGE SCALE GENOMIC DNA]</scope>
    <source>
        <strain>ATCC 29082 / PCC 7421</strain>
    </source>
</reference>
<reference key="2">
    <citation type="journal article" date="2004" name="FEBS Lett.">
        <title>Unique constitution of photosystem I with a novel subunit in the cyanobacterium Gloeobacter violaceus PCC 7421.</title>
        <authorList>
            <person name="Inoue H."/>
            <person name="Tsuchiya T."/>
            <person name="Satoh S."/>
            <person name="Miyashita H."/>
            <person name="Kaneko T."/>
            <person name="Tabata S."/>
            <person name="Tanaka A."/>
            <person name="Mimuro M."/>
        </authorList>
    </citation>
    <scope>PROTEIN SEQUENCE OF 1-14</scope>
    <scope>IDENTIFICATION BY MASS SPECTROMETRY</scope>
    <scope>CHARACTERIZATION OF PHOTOSYSTEM I</scope>
    <source>
        <strain>ATCC 29082 / PCC 7421</strain>
    </source>
</reference>
<accession>P0C029</accession>
<sequence>MQSYNVFPALVIITTLVVPFMAAAALLFIIERDPS</sequence>
<comment type="subunit">
    <text>The G.violaceus PSI reaction center is composed of one copy each of PsaA,B,C,D,E,F,L,M and Z, and forms trimeric complexes.</text>
</comment>
<comment type="subcellular location">
    <subcellularLocation>
        <location>Cell inner membrane</location>
        <topology>Single-pass membrane protein</topology>
    </subcellularLocation>
</comment>
<proteinExistence type="evidence at protein level"/>
<name>PSAZ_GLOVI</name>
<gene>
    <name type="primary">psaZ</name>
    <name type="ordered locus">gsr5001</name>
</gene>
<evidence type="ECO:0000255" key="1"/>
<protein>
    <recommendedName>
        <fullName>Photosystem I reaction center subunit Z</fullName>
        <shortName>PSI-Z</shortName>
    </recommendedName>
</protein>
<keyword id="KW-0002">3D-structure</keyword>
<keyword id="KW-0997">Cell inner membrane</keyword>
<keyword id="KW-1003">Cell membrane</keyword>
<keyword id="KW-0903">Direct protein sequencing</keyword>
<keyword id="KW-0472">Membrane</keyword>
<keyword id="KW-0602">Photosynthesis</keyword>
<keyword id="KW-0603">Photosystem I</keyword>
<keyword id="KW-1185">Reference proteome</keyword>
<keyword id="KW-0812">Transmembrane</keyword>
<keyword id="KW-1133">Transmembrane helix</keyword>
<dbReference type="EMBL" id="BA000045">
    <property type="status" value="NOT_ANNOTATED_CDS"/>
    <property type="molecule type" value="Genomic_DNA"/>
</dbReference>
<dbReference type="PDB" id="7F4V">
    <property type="method" value="EM"/>
    <property type="resolution" value="2.04 A"/>
    <property type="chains" value="aI/bI/cI=1-35"/>
</dbReference>
<dbReference type="PDBsum" id="7F4V"/>
<dbReference type="EMDB" id="EMD-31455"/>
<dbReference type="SMR" id="P0C029"/>
<dbReference type="InParanoid" id="P0C029"/>
<dbReference type="Proteomes" id="UP000000557">
    <property type="component" value="Chromosome"/>
</dbReference>
<dbReference type="GO" id="GO:0009522">
    <property type="term" value="C:photosystem I"/>
    <property type="evidence" value="ECO:0007669"/>
    <property type="project" value="UniProtKB-KW"/>
</dbReference>
<dbReference type="GO" id="GO:0005886">
    <property type="term" value="C:plasma membrane"/>
    <property type="evidence" value="ECO:0007669"/>
    <property type="project" value="UniProtKB-SubCell"/>
</dbReference>
<dbReference type="GO" id="GO:0015979">
    <property type="term" value="P:photosynthesis"/>
    <property type="evidence" value="ECO:0007669"/>
    <property type="project" value="UniProtKB-KW"/>
</dbReference>
<feature type="chain" id="PRO_0000207777" description="Photosystem I reaction center subunit Z">
    <location>
        <begin position="1"/>
        <end position="35"/>
    </location>
</feature>
<feature type="transmembrane region" description="Helical" evidence="1">
    <location>
        <begin position="10"/>
        <end position="30"/>
    </location>
</feature>
<organism>
    <name type="scientific">Gloeobacter violaceus (strain ATCC 29082 / PCC 7421)</name>
    <dbReference type="NCBI Taxonomy" id="251221"/>
    <lineage>
        <taxon>Bacteria</taxon>
        <taxon>Bacillati</taxon>
        <taxon>Cyanobacteriota</taxon>
        <taxon>Cyanophyceae</taxon>
        <taxon>Gloeobacterales</taxon>
        <taxon>Gloeobacteraceae</taxon>
        <taxon>Gloeobacter</taxon>
    </lineage>
</organism>